<sequence>MKITHTAIEFAPVIKAGGLGDALYGLAKALAVNHTTEVVIPLYPKLFTSLHEQDLFATQKIPYFFAGEQEATAFSYFYEGIKVTLLKLDSQPELFEEAETIYTNDDAFRFCAFSAAAAAYIQKEGADIVHLHDWHVGLVAGLLKQQPCPQLQKIVLTLHNFGYRGYTTREVLEASSLNEFYLSHYQLFRDPQTCVLLKGALYCSDFVTTVSPTYAKEILQDYSDYEIHDAITARQHHLKGILNGIDYTILDPETDPHLAKNYSKVLFEDPKAFFEAKAENKKALYETLGLSLDKSPCMCIISRIAEQKGPEFMKQAILHALENAYTLIIIGTCYGGQIHKEFSNLQESLADSPNVRILLTYSDVLARQIFAAADMICIPSMFEPCGLTQMIGMRYGTVPVVRATGGLADTVTDGVNGFSFSNPHDFHEFRNMLSKAIATYRDDQDKWQQIVRSCLEFSSDLETAANKYLEIYQQ</sequence>
<organism>
    <name type="scientific">Chlamydia muridarum (strain MoPn / Nigg)</name>
    <dbReference type="NCBI Taxonomy" id="243161"/>
    <lineage>
        <taxon>Bacteria</taxon>
        <taxon>Pseudomonadati</taxon>
        <taxon>Chlamydiota</taxon>
        <taxon>Chlamydiia</taxon>
        <taxon>Chlamydiales</taxon>
        <taxon>Chlamydiaceae</taxon>
        <taxon>Chlamydia/Chlamydophila group</taxon>
        <taxon>Chlamydia</taxon>
    </lineage>
</organism>
<protein>
    <recommendedName>
        <fullName evidence="1">Glycogen synthase</fullName>
        <ecNumber evidence="1">2.4.1.21</ecNumber>
    </recommendedName>
    <alternativeName>
        <fullName evidence="1">Starch [bacterial glycogen] synthase</fullName>
    </alternativeName>
</protein>
<reference key="1">
    <citation type="journal article" date="2000" name="Nucleic Acids Res.">
        <title>Genome sequences of Chlamydia trachomatis MoPn and Chlamydia pneumoniae AR39.</title>
        <authorList>
            <person name="Read T.D."/>
            <person name="Brunham R.C."/>
            <person name="Shen C."/>
            <person name="Gill S.R."/>
            <person name="Heidelberg J.F."/>
            <person name="White O."/>
            <person name="Hickey E.K."/>
            <person name="Peterson J.D."/>
            <person name="Utterback T.R."/>
            <person name="Berry K.J."/>
            <person name="Bass S."/>
            <person name="Linher K.D."/>
            <person name="Weidman J.F."/>
            <person name="Khouri H.M."/>
            <person name="Craven B."/>
            <person name="Bowman C."/>
            <person name="Dodson R.J."/>
            <person name="Gwinn M.L."/>
            <person name="Nelson W.C."/>
            <person name="DeBoy R.T."/>
            <person name="Kolonay J.F."/>
            <person name="McClarty G."/>
            <person name="Salzberg S.L."/>
            <person name="Eisen J.A."/>
            <person name="Fraser C.M."/>
        </authorList>
    </citation>
    <scope>NUCLEOTIDE SEQUENCE [LARGE SCALE GENOMIC DNA]</scope>
    <source>
        <strain>MoPn / Nigg</strain>
    </source>
</reference>
<proteinExistence type="inferred from homology"/>
<evidence type="ECO:0000255" key="1">
    <source>
        <dbReference type="HAMAP-Rule" id="MF_00484"/>
    </source>
</evidence>
<keyword id="KW-0320">Glycogen biosynthesis</keyword>
<keyword id="KW-0328">Glycosyltransferase</keyword>
<keyword id="KW-0808">Transferase</keyword>
<feature type="chain" id="PRO_0000188603" description="Glycogen synthase">
    <location>
        <begin position="1"/>
        <end position="474"/>
    </location>
</feature>
<feature type="binding site" evidence="1">
    <location>
        <position position="15"/>
    </location>
    <ligand>
        <name>ADP-alpha-D-glucose</name>
        <dbReference type="ChEBI" id="CHEBI:57498"/>
    </ligand>
</feature>
<gene>
    <name evidence="1" type="primary">glgA</name>
    <name type="ordered locus">TC_0181</name>
</gene>
<accession>Q9PLC3</accession>
<dbReference type="EC" id="2.4.1.21" evidence="1"/>
<dbReference type="EMBL" id="AE002160">
    <property type="protein sequence ID" value="AAF39055.1"/>
    <property type="molecule type" value="Genomic_DNA"/>
</dbReference>
<dbReference type="PIR" id="A81732">
    <property type="entry name" value="A81732"/>
</dbReference>
<dbReference type="RefSeq" id="WP_010229734.1">
    <property type="nucleotide sequence ID" value="NZ_CP063055.1"/>
</dbReference>
<dbReference type="SMR" id="Q9PLC3"/>
<dbReference type="CAZy" id="GT5">
    <property type="family name" value="Glycosyltransferase Family 5"/>
</dbReference>
<dbReference type="GeneID" id="1246306"/>
<dbReference type="KEGG" id="cmu:TC_0181"/>
<dbReference type="eggNOG" id="COG0297">
    <property type="taxonomic scope" value="Bacteria"/>
</dbReference>
<dbReference type="HOGENOM" id="CLU_009583_18_3_0"/>
<dbReference type="OrthoDB" id="9808590at2"/>
<dbReference type="UniPathway" id="UPA00164"/>
<dbReference type="Proteomes" id="UP000000800">
    <property type="component" value="Chromosome"/>
</dbReference>
<dbReference type="GO" id="GO:0009011">
    <property type="term" value="F:alpha-1,4-glucan glucosyltransferase (ADP-glucose donor) activity"/>
    <property type="evidence" value="ECO:0007669"/>
    <property type="project" value="UniProtKB-UniRule"/>
</dbReference>
<dbReference type="GO" id="GO:0004373">
    <property type="term" value="F:alpha-1,4-glucan glucosyltransferase (UDP-glucose donor) activity"/>
    <property type="evidence" value="ECO:0007669"/>
    <property type="project" value="InterPro"/>
</dbReference>
<dbReference type="GO" id="GO:0005978">
    <property type="term" value="P:glycogen biosynthetic process"/>
    <property type="evidence" value="ECO:0007669"/>
    <property type="project" value="UniProtKB-UniRule"/>
</dbReference>
<dbReference type="CDD" id="cd03791">
    <property type="entry name" value="GT5_Glycogen_synthase_DULL1-like"/>
    <property type="match status" value="1"/>
</dbReference>
<dbReference type="Gene3D" id="3.40.50.2000">
    <property type="entry name" value="Glycogen Phosphorylase B"/>
    <property type="match status" value="2"/>
</dbReference>
<dbReference type="HAMAP" id="MF_00484">
    <property type="entry name" value="Glycogen_synth"/>
    <property type="match status" value="1"/>
</dbReference>
<dbReference type="InterPro" id="IPR001296">
    <property type="entry name" value="Glyco_trans_1"/>
</dbReference>
<dbReference type="InterPro" id="IPR011835">
    <property type="entry name" value="GS/SS"/>
</dbReference>
<dbReference type="InterPro" id="IPR013534">
    <property type="entry name" value="Starch_synth_cat_dom"/>
</dbReference>
<dbReference type="NCBIfam" id="TIGR02095">
    <property type="entry name" value="glgA"/>
    <property type="match status" value="1"/>
</dbReference>
<dbReference type="NCBIfam" id="NF001904">
    <property type="entry name" value="PRK00654.2-3"/>
    <property type="match status" value="1"/>
</dbReference>
<dbReference type="PANTHER" id="PTHR46083">
    <property type="match status" value="1"/>
</dbReference>
<dbReference type="PANTHER" id="PTHR46083:SF1">
    <property type="entry name" value="GLYCOGEN SYNTHASE 2-RELATED"/>
    <property type="match status" value="1"/>
</dbReference>
<dbReference type="Pfam" id="PF08323">
    <property type="entry name" value="Glyco_transf_5"/>
    <property type="match status" value="1"/>
</dbReference>
<dbReference type="Pfam" id="PF00534">
    <property type="entry name" value="Glycos_transf_1"/>
    <property type="match status" value="1"/>
</dbReference>
<dbReference type="SUPFAM" id="SSF53756">
    <property type="entry name" value="UDP-Glycosyltransferase/glycogen phosphorylase"/>
    <property type="match status" value="1"/>
</dbReference>
<name>GLGA_CHLMU</name>
<comment type="function">
    <text evidence="1">Synthesizes alpha-1,4-glucan chains using ADP-glucose.</text>
</comment>
<comment type="catalytic activity">
    <reaction evidence="1">
        <text>[(1-&gt;4)-alpha-D-glucosyl](n) + ADP-alpha-D-glucose = [(1-&gt;4)-alpha-D-glucosyl](n+1) + ADP + H(+)</text>
        <dbReference type="Rhea" id="RHEA:18189"/>
        <dbReference type="Rhea" id="RHEA-COMP:9584"/>
        <dbReference type="Rhea" id="RHEA-COMP:9587"/>
        <dbReference type="ChEBI" id="CHEBI:15378"/>
        <dbReference type="ChEBI" id="CHEBI:15444"/>
        <dbReference type="ChEBI" id="CHEBI:57498"/>
        <dbReference type="ChEBI" id="CHEBI:456216"/>
        <dbReference type="EC" id="2.4.1.21"/>
    </reaction>
</comment>
<comment type="pathway">
    <text evidence="1">Glycan biosynthesis; glycogen biosynthesis.</text>
</comment>
<comment type="similarity">
    <text evidence="1">Belongs to the glycosyltransferase 1 family. Bacterial/plant glycogen synthase subfamily.</text>
</comment>